<protein>
    <recommendedName>
        <fullName>Non-structural protein 3a</fullName>
        <shortName>ns3a</shortName>
    </recommendedName>
    <alternativeName>
        <fullName>Accessory protein 3a</fullName>
    </alternativeName>
</protein>
<proteinExistence type="inferred from homology"/>
<organismHost>
    <name type="scientific">Tylonycteris pachypus</name>
    <name type="common">Lesser bamboo bat</name>
    <name type="synonym">Vespertilio pachypus</name>
    <dbReference type="NCBI Taxonomy" id="258959"/>
</organismHost>
<accession>A3EX95</accession>
<name>NS3A_BCHK4</name>
<feature type="signal peptide" evidence="1">
    <location>
        <begin position="1"/>
        <end position="19"/>
    </location>
</feature>
<feature type="chain" id="PRO_0000290262" description="Non-structural protein 3a">
    <location>
        <begin position="20"/>
        <end position="91"/>
    </location>
</feature>
<evidence type="ECO:0000255" key="1"/>
<dbReference type="EMBL" id="EF065505">
    <property type="protein sequence ID" value="ABN10840.1"/>
    <property type="molecule type" value="Genomic_RNA"/>
</dbReference>
<dbReference type="KEGG" id="vg:4835990"/>
<dbReference type="OrthoDB" id="37474at10239"/>
<dbReference type="Proteomes" id="UP000006574">
    <property type="component" value="Genome"/>
</dbReference>
<organism>
    <name type="scientific">Bat coronavirus HKU4</name>
    <name type="common">BtCoV</name>
    <name type="synonym">BtCoV/HKU4/2004</name>
    <dbReference type="NCBI Taxonomy" id="694007"/>
    <lineage>
        <taxon>Viruses</taxon>
        <taxon>Riboviria</taxon>
        <taxon>Orthornavirae</taxon>
        <taxon>Pisuviricota</taxon>
        <taxon>Pisoniviricetes</taxon>
        <taxon>Nidovirales</taxon>
        <taxon>Cornidovirineae</taxon>
        <taxon>Coronaviridae</taxon>
        <taxon>Orthocoronavirinae</taxon>
        <taxon>Betacoronavirus</taxon>
        <taxon>Merbecovirus</taxon>
    </lineage>
</organism>
<keyword id="KW-1185">Reference proteome</keyword>
<keyword id="KW-0732">Signal</keyword>
<sequence length="91" mass="9901">MVSFNATAILLLLLANAFSKPLYVPEHCGGMSGTLFQACIRQTMVDTTGMYTNSAMSHDGVTIPFDRDGIVHEDHYTETNPTPLFDAGFSV</sequence>
<reference key="1">
    <citation type="journal article" date="2007" name="J. Virol.">
        <title>Comparative analysis of twelve genomes of three novel group 2c and group 2d coronaviruses reveals unique group and subgroup features.</title>
        <authorList>
            <person name="Woo P.C.Y."/>
            <person name="Wang M."/>
            <person name="Lau S.K.P."/>
            <person name="Xu H.F."/>
            <person name="Poon R.W.S."/>
            <person name="Guo R."/>
            <person name="Wong B.H.L."/>
            <person name="Gao K."/>
            <person name="Tsoi H.-W."/>
            <person name="Huang Y."/>
            <person name="Li K.S.M."/>
            <person name="Lam C.S.F."/>
            <person name="Chan K.-H."/>
            <person name="Zheng B.-J."/>
            <person name="Yuen K.-Y."/>
        </authorList>
    </citation>
    <scope>NUCLEOTIDE SEQUENCE [GENOMIC RNA]</scope>
    <source>
        <strain>Isolate HKU4-1</strain>
    </source>
</reference>
<gene>
    <name type="ORF">3a</name>
</gene>